<proteinExistence type="inferred from homology"/>
<comment type="subcellular location">
    <subcellularLocation>
        <location evidence="1">Cell inner membrane</location>
        <topology evidence="1">Multi-pass membrane protein</topology>
    </subcellularLocation>
</comment>
<comment type="similarity">
    <text evidence="1">Belongs to the UPF0208 family.</text>
</comment>
<feature type="chain" id="PRO_1000064970" description="UPF0208 membrane protein YfbV">
    <location>
        <begin position="1"/>
        <end position="151"/>
    </location>
</feature>
<feature type="transmembrane region" description="Helical" evidence="1">
    <location>
        <begin position="46"/>
        <end position="65"/>
    </location>
</feature>
<feature type="transmembrane region" description="Helical" evidence="1">
    <location>
        <begin position="69"/>
        <end position="91"/>
    </location>
</feature>
<keyword id="KW-0997">Cell inner membrane</keyword>
<keyword id="KW-1003">Cell membrane</keyword>
<keyword id="KW-0472">Membrane</keyword>
<keyword id="KW-0812">Transmembrane</keyword>
<keyword id="KW-1133">Transmembrane helix</keyword>
<organism>
    <name type="scientific">Escherichia coli O6:K15:H31 (strain 536 / UPEC)</name>
    <dbReference type="NCBI Taxonomy" id="362663"/>
    <lineage>
        <taxon>Bacteria</taxon>
        <taxon>Pseudomonadati</taxon>
        <taxon>Pseudomonadota</taxon>
        <taxon>Gammaproteobacteria</taxon>
        <taxon>Enterobacterales</taxon>
        <taxon>Enterobacteriaceae</taxon>
        <taxon>Escherichia</taxon>
    </lineage>
</organism>
<evidence type="ECO:0000255" key="1">
    <source>
        <dbReference type="HAMAP-Rule" id="MF_01101"/>
    </source>
</evidence>
<accession>Q0TFF1</accession>
<reference key="1">
    <citation type="journal article" date="2006" name="Mol. Microbiol.">
        <title>Role of pathogenicity island-associated integrases in the genome plasticity of uropathogenic Escherichia coli strain 536.</title>
        <authorList>
            <person name="Hochhut B."/>
            <person name="Wilde C."/>
            <person name="Balling G."/>
            <person name="Middendorf B."/>
            <person name="Dobrindt U."/>
            <person name="Brzuszkiewicz E."/>
            <person name="Gottschalk G."/>
            <person name="Carniel E."/>
            <person name="Hacker J."/>
        </authorList>
    </citation>
    <scope>NUCLEOTIDE SEQUENCE [LARGE SCALE GENOMIC DNA]</scope>
    <source>
        <strain>536 / UPEC</strain>
    </source>
</reference>
<gene>
    <name evidence="1" type="primary">yfbV</name>
    <name type="ordered locus">ECP_2334</name>
</gene>
<name>YFBV_ECOL5</name>
<dbReference type="EMBL" id="CP000247">
    <property type="protein sequence ID" value="ABG70328.1"/>
    <property type="molecule type" value="Genomic_DNA"/>
</dbReference>
<dbReference type="RefSeq" id="WP_000106627.1">
    <property type="nucleotide sequence ID" value="NC_008253.1"/>
</dbReference>
<dbReference type="GeneID" id="93774879"/>
<dbReference type="KEGG" id="ecp:ECP_2334"/>
<dbReference type="HOGENOM" id="CLU_128746_0_0_6"/>
<dbReference type="Proteomes" id="UP000009182">
    <property type="component" value="Chromosome"/>
</dbReference>
<dbReference type="GO" id="GO:0005886">
    <property type="term" value="C:plasma membrane"/>
    <property type="evidence" value="ECO:0007669"/>
    <property type="project" value="UniProtKB-SubCell"/>
</dbReference>
<dbReference type="HAMAP" id="MF_01101">
    <property type="entry name" value="UPF0208"/>
    <property type="match status" value="1"/>
</dbReference>
<dbReference type="InterPro" id="IPR007334">
    <property type="entry name" value="UPF0208"/>
</dbReference>
<dbReference type="NCBIfam" id="NF002493">
    <property type="entry name" value="PRK01816.1"/>
    <property type="match status" value="1"/>
</dbReference>
<dbReference type="Pfam" id="PF04217">
    <property type="entry name" value="DUF412"/>
    <property type="match status" value="1"/>
</dbReference>
<protein>
    <recommendedName>
        <fullName evidence="1">UPF0208 membrane protein YfbV</fullName>
    </recommendedName>
</protein>
<sequence>MSTPDNRSVNFFSLFRRGQHYSKTWPLEKRLAPVFVENRVIKMTRYAIRFMPPIAVFTLCWQIALGGQLGPAVATALFALSLPMQGLWWLGKRSVTPLPPAILNWFYEVRGKLQESGQVLAPVEGKPDYQALADTLKRAFKQLDKTFLDDL</sequence>